<comment type="function">
    <text evidence="1">Involved in the biosynthesis of the chorismate, which leads to the biosynthesis of aromatic amino acids. Catalyzes the reversible NADPH linked reduction of 3-dehydroshikimate (DHSA) to yield shikimate (SA).</text>
</comment>
<comment type="catalytic activity">
    <reaction evidence="1">
        <text>shikimate + NADP(+) = 3-dehydroshikimate + NADPH + H(+)</text>
        <dbReference type="Rhea" id="RHEA:17737"/>
        <dbReference type="ChEBI" id="CHEBI:15378"/>
        <dbReference type="ChEBI" id="CHEBI:16630"/>
        <dbReference type="ChEBI" id="CHEBI:36208"/>
        <dbReference type="ChEBI" id="CHEBI:57783"/>
        <dbReference type="ChEBI" id="CHEBI:58349"/>
        <dbReference type="EC" id="1.1.1.25"/>
    </reaction>
</comment>
<comment type="pathway">
    <text evidence="1">Metabolic intermediate biosynthesis; chorismate biosynthesis; chorismate from D-erythrose 4-phosphate and phosphoenolpyruvate: step 4/7.</text>
</comment>
<comment type="subunit">
    <text evidence="1">Homodimer.</text>
</comment>
<comment type="similarity">
    <text evidence="1">Belongs to the shikimate dehydrogenase family.</text>
</comment>
<proteinExistence type="inferred from homology"/>
<reference key="1">
    <citation type="submission" date="2006-03" db="EMBL/GenBank/DDBJ databases">
        <title>Complete sequence of chromosome of Nitrobacter hamburgensis X14.</title>
        <authorList>
            <consortium name="US DOE Joint Genome Institute"/>
            <person name="Copeland A."/>
            <person name="Lucas S."/>
            <person name="Lapidus A."/>
            <person name="Barry K."/>
            <person name="Detter J.C."/>
            <person name="Glavina del Rio T."/>
            <person name="Hammon N."/>
            <person name="Israni S."/>
            <person name="Dalin E."/>
            <person name="Tice H."/>
            <person name="Pitluck S."/>
            <person name="Chain P."/>
            <person name="Malfatti S."/>
            <person name="Shin M."/>
            <person name="Vergez L."/>
            <person name="Schmutz J."/>
            <person name="Larimer F."/>
            <person name="Land M."/>
            <person name="Hauser L."/>
            <person name="Kyrpides N."/>
            <person name="Ivanova N."/>
            <person name="Ward B."/>
            <person name="Arp D."/>
            <person name="Klotz M."/>
            <person name="Stein L."/>
            <person name="O'Mullan G."/>
            <person name="Starkenburg S."/>
            <person name="Sayavedra L."/>
            <person name="Poret-Peterson A.T."/>
            <person name="Gentry M.E."/>
            <person name="Bruce D."/>
            <person name="Richardson P."/>
        </authorList>
    </citation>
    <scope>NUCLEOTIDE SEQUENCE [LARGE SCALE GENOMIC DNA]</scope>
    <source>
        <strain>DSM 10229 / NCIMB 13809 / X14</strain>
    </source>
</reference>
<evidence type="ECO:0000255" key="1">
    <source>
        <dbReference type="HAMAP-Rule" id="MF_00222"/>
    </source>
</evidence>
<gene>
    <name evidence="1" type="primary">aroE</name>
    <name type="ordered locus">Nham_1109</name>
</gene>
<keyword id="KW-0028">Amino-acid biosynthesis</keyword>
<keyword id="KW-0057">Aromatic amino acid biosynthesis</keyword>
<keyword id="KW-0521">NADP</keyword>
<keyword id="KW-0560">Oxidoreductase</keyword>
<keyword id="KW-1185">Reference proteome</keyword>
<name>AROE_NITHX</name>
<sequence length="285" mass="30494">MMTAETKGRAACLIGWPAAHSRSPLIHHYWLRLHGIAGGYNIEAIPPEGLAEFIMHLSTHGFVGANVTIPHKERALQLTAPDERARAIGAANTLYYDGKTLRSTNTDVEGFIGNLDAAAPGWDRTGDALVLGAGGSSRAVVFGLIERGIKRIHLVNRTMERAQALADQFGATVMPLAWSGLGDVLPRAGLLVNTTSLGMKGQPPLDIELPLLPLDAVVADLVYVPLETPLLAAARARGLRTADGLGMLLHQAVRGFELWFGQRPAVSPELRALVEADLRIPHPAT</sequence>
<feature type="chain" id="PRO_0000325137" description="Shikimate dehydrogenase (NADP(+))">
    <location>
        <begin position="1"/>
        <end position="285"/>
    </location>
</feature>
<feature type="active site" description="Proton acceptor" evidence="1">
    <location>
        <position position="72"/>
    </location>
</feature>
<feature type="binding site" evidence="1">
    <location>
        <begin position="21"/>
        <end position="23"/>
    </location>
    <ligand>
        <name>shikimate</name>
        <dbReference type="ChEBI" id="CHEBI:36208"/>
    </ligand>
</feature>
<feature type="binding site" evidence="1">
    <location>
        <position position="68"/>
    </location>
    <ligand>
        <name>shikimate</name>
        <dbReference type="ChEBI" id="CHEBI:36208"/>
    </ligand>
</feature>
<feature type="binding site" evidence="1">
    <location>
        <position position="83"/>
    </location>
    <ligand>
        <name>NADP(+)</name>
        <dbReference type="ChEBI" id="CHEBI:58349"/>
    </ligand>
</feature>
<feature type="binding site" evidence="1">
    <location>
        <position position="92"/>
    </location>
    <ligand>
        <name>shikimate</name>
        <dbReference type="ChEBI" id="CHEBI:36208"/>
    </ligand>
</feature>
<feature type="binding site" evidence="1">
    <location>
        <position position="107"/>
    </location>
    <ligand>
        <name>shikimate</name>
        <dbReference type="ChEBI" id="CHEBI:36208"/>
    </ligand>
</feature>
<feature type="binding site" evidence="1">
    <location>
        <begin position="132"/>
        <end position="136"/>
    </location>
    <ligand>
        <name>NADP(+)</name>
        <dbReference type="ChEBI" id="CHEBI:58349"/>
    </ligand>
</feature>
<feature type="binding site" evidence="1">
    <location>
        <begin position="156"/>
        <end position="161"/>
    </location>
    <ligand>
        <name>NADP(+)</name>
        <dbReference type="ChEBI" id="CHEBI:58349"/>
    </ligand>
</feature>
<feature type="binding site" evidence="1">
    <location>
        <position position="221"/>
    </location>
    <ligand>
        <name>NADP(+)</name>
        <dbReference type="ChEBI" id="CHEBI:58349"/>
    </ligand>
</feature>
<feature type="binding site" evidence="1">
    <location>
        <position position="223"/>
    </location>
    <ligand>
        <name>shikimate</name>
        <dbReference type="ChEBI" id="CHEBI:36208"/>
    </ligand>
</feature>
<feature type="binding site" evidence="1">
    <location>
        <position position="244"/>
    </location>
    <ligand>
        <name>NADP(+)</name>
        <dbReference type="ChEBI" id="CHEBI:58349"/>
    </ligand>
</feature>
<organism>
    <name type="scientific">Nitrobacter hamburgensis (strain DSM 10229 / NCIMB 13809 / X14)</name>
    <dbReference type="NCBI Taxonomy" id="323097"/>
    <lineage>
        <taxon>Bacteria</taxon>
        <taxon>Pseudomonadati</taxon>
        <taxon>Pseudomonadota</taxon>
        <taxon>Alphaproteobacteria</taxon>
        <taxon>Hyphomicrobiales</taxon>
        <taxon>Nitrobacteraceae</taxon>
        <taxon>Nitrobacter</taxon>
    </lineage>
</organism>
<dbReference type="EC" id="1.1.1.25" evidence="1"/>
<dbReference type="EMBL" id="CP000319">
    <property type="protein sequence ID" value="ABE61956.1"/>
    <property type="molecule type" value="Genomic_DNA"/>
</dbReference>
<dbReference type="RefSeq" id="WP_011509651.1">
    <property type="nucleotide sequence ID" value="NC_007964.1"/>
</dbReference>
<dbReference type="SMR" id="Q1QP91"/>
<dbReference type="STRING" id="323097.Nham_1109"/>
<dbReference type="KEGG" id="nha:Nham_1109"/>
<dbReference type="eggNOG" id="COG0169">
    <property type="taxonomic scope" value="Bacteria"/>
</dbReference>
<dbReference type="HOGENOM" id="CLU_044063_2_0_5"/>
<dbReference type="OrthoDB" id="9792692at2"/>
<dbReference type="UniPathway" id="UPA00053">
    <property type="reaction ID" value="UER00087"/>
</dbReference>
<dbReference type="Proteomes" id="UP000001953">
    <property type="component" value="Chromosome"/>
</dbReference>
<dbReference type="GO" id="GO:0005829">
    <property type="term" value="C:cytosol"/>
    <property type="evidence" value="ECO:0007669"/>
    <property type="project" value="TreeGrafter"/>
</dbReference>
<dbReference type="GO" id="GO:0050661">
    <property type="term" value="F:NADP binding"/>
    <property type="evidence" value="ECO:0007669"/>
    <property type="project" value="InterPro"/>
</dbReference>
<dbReference type="GO" id="GO:0004764">
    <property type="term" value="F:shikimate 3-dehydrogenase (NADP+) activity"/>
    <property type="evidence" value="ECO:0007669"/>
    <property type="project" value="UniProtKB-UniRule"/>
</dbReference>
<dbReference type="GO" id="GO:0008652">
    <property type="term" value="P:amino acid biosynthetic process"/>
    <property type="evidence" value="ECO:0007669"/>
    <property type="project" value="UniProtKB-KW"/>
</dbReference>
<dbReference type="GO" id="GO:0009073">
    <property type="term" value="P:aromatic amino acid family biosynthetic process"/>
    <property type="evidence" value="ECO:0007669"/>
    <property type="project" value="UniProtKB-KW"/>
</dbReference>
<dbReference type="GO" id="GO:0009423">
    <property type="term" value="P:chorismate biosynthetic process"/>
    <property type="evidence" value="ECO:0007669"/>
    <property type="project" value="UniProtKB-UniRule"/>
</dbReference>
<dbReference type="GO" id="GO:0019632">
    <property type="term" value="P:shikimate metabolic process"/>
    <property type="evidence" value="ECO:0007669"/>
    <property type="project" value="InterPro"/>
</dbReference>
<dbReference type="CDD" id="cd01065">
    <property type="entry name" value="NAD_bind_Shikimate_DH"/>
    <property type="match status" value="1"/>
</dbReference>
<dbReference type="Gene3D" id="3.40.50.10860">
    <property type="entry name" value="Leucine Dehydrogenase, chain A, domain 1"/>
    <property type="match status" value="1"/>
</dbReference>
<dbReference type="Gene3D" id="3.40.50.720">
    <property type="entry name" value="NAD(P)-binding Rossmann-like Domain"/>
    <property type="match status" value="1"/>
</dbReference>
<dbReference type="HAMAP" id="MF_00222">
    <property type="entry name" value="Shikimate_DH_AroE"/>
    <property type="match status" value="1"/>
</dbReference>
<dbReference type="InterPro" id="IPR046346">
    <property type="entry name" value="Aminoacid_DH-like_N_sf"/>
</dbReference>
<dbReference type="InterPro" id="IPR036291">
    <property type="entry name" value="NAD(P)-bd_dom_sf"/>
</dbReference>
<dbReference type="InterPro" id="IPR041121">
    <property type="entry name" value="SDH_C"/>
</dbReference>
<dbReference type="InterPro" id="IPR011342">
    <property type="entry name" value="Shikimate_DH"/>
</dbReference>
<dbReference type="InterPro" id="IPR013708">
    <property type="entry name" value="Shikimate_DH-bd_N"/>
</dbReference>
<dbReference type="InterPro" id="IPR022893">
    <property type="entry name" value="Shikimate_DH_fam"/>
</dbReference>
<dbReference type="InterPro" id="IPR006151">
    <property type="entry name" value="Shikm_DH/Glu-tRNA_Rdtase"/>
</dbReference>
<dbReference type="NCBIfam" id="TIGR00507">
    <property type="entry name" value="aroE"/>
    <property type="match status" value="1"/>
</dbReference>
<dbReference type="NCBIfam" id="NF001312">
    <property type="entry name" value="PRK00258.1-4"/>
    <property type="match status" value="1"/>
</dbReference>
<dbReference type="PANTHER" id="PTHR21089:SF1">
    <property type="entry name" value="BIFUNCTIONAL 3-DEHYDROQUINATE DEHYDRATASE_SHIKIMATE DEHYDROGENASE, CHLOROPLASTIC"/>
    <property type="match status" value="1"/>
</dbReference>
<dbReference type="PANTHER" id="PTHR21089">
    <property type="entry name" value="SHIKIMATE DEHYDROGENASE"/>
    <property type="match status" value="1"/>
</dbReference>
<dbReference type="Pfam" id="PF18317">
    <property type="entry name" value="SDH_C"/>
    <property type="match status" value="1"/>
</dbReference>
<dbReference type="Pfam" id="PF01488">
    <property type="entry name" value="Shikimate_DH"/>
    <property type="match status" value="1"/>
</dbReference>
<dbReference type="Pfam" id="PF08501">
    <property type="entry name" value="Shikimate_dh_N"/>
    <property type="match status" value="1"/>
</dbReference>
<dbReference type="SUPFAM" id="SSF53223">
    <property type="entry name" value="Aminoacid dehydrogenase-like, N-terminal domain"/>
    <property type="match status" value="1"/>
</dbReference>
<dbReference type="SUPFAM" id="SSF51735">
    <property type="entry name" value="NAD(P)-binding Rossmann-fold domains"/>
    <property type="match status" value="1"/>
</dbReference>
<protein>
    <recommendedName>
        <fullName evidence="1">Shikimate dehydrogenase (NADP(+))</fullName>
        <shortName evidence="1">SDH</shortName>
        <ecNumber evidence="1">1.1.1.25</ecNumber>
    </recommendedName>
</protein>
<accession>Q1QP91</accession>